<dbReference type="EMBL" id="Z12610">
    <property type="protein sequence ID" value="CAA78254.1"/>
    <property type="molecule type" value="Genomic_DNA"/>
</dbReference>
<dbReference type="PIR" id="B47698">
    <property type="entry name" value="B47698"/>
</dbReference>
<dbReference type="GO" id="GO:0005576">
    <property type="term" value="C:extracellular region"/>
    <property type="evidence" value="ECO:0007669"/>
    <property type="project" value="UniProtKB-SubCell"/>
</dbReference>
<keyword id="KW-0348">Hemagglutinin</keyword>
<keyword id="KW-0964">Secreted</keyword>
<name>HAG2_EIKCO</name>
<evidence type="ECO:0000305" key="1"/>
<feature type="chain" id="PRO_0000083889" description="Hemagglutinin 2">
    <location>
        <begin position="1"/>
        <end position="212"/>
    </location>
</feature>
<accession>P35648</accession>
<gene>
    <name type="primary">hag2</name>
</gene>
<proteinExistence type="predicted"/>
<organism>
    <name type="scientific">Eikenella corrodens</name>
    <dbReference type="NCBI Taxonomy" id="539"/>
    <lineage>
        <taxon>Bacteria</taxon>
        <taxon>Pseudomonadati</taxon>
        <taxon>Pseudomonadota</taxon>
        <taxon>Betaproteobacteria</taxon>
        <taxon>Neisseriales</taxon>
        <taxon>Neisseriaceae</taxon>
        <taxon>Eikenella</taxon>
    </lineage>
</organism>
<comment type="function">
    <text>Induces agglutination of neuraminidase-treated erythrocytes.</text>
</comment>
<comment type="subcellular location">
    <subcellularLocation>
        <location evidence="1">Secreted</location>
    </subcellularLocation>
</comment>
<reference key="1">
    <citation type="journal article" date="1993" name="J. Gen. Microbiol.">
        <title>Cloning, characterization and sequencing of two haemagglutinin genes from Eikenella corrodens.</title>
        <authorList>
            <person name="Rao V.K."/>
            <person name="Whitlock J.A."/>
            <person name="Progulske-Fox A."/>
        </authorList>
    </citation>
    <scope>NUCLEOTIDE SEQUENCE [GENOMIC DNA]</scope>
    <source>
        <strain>ATCC 23834 / DSM 8340 / JCM 12952 / KCTC 15198 / LMG 15557 / NCTC 10596 / 333/54-55</strain>
    </source>
</reference>
<sequence length="212" mass="23722">MHFTQFMGQASVEQDTFGSSGFTRINVGRNTDITVQINRGFTSHFNRLSKLEAEVREGFVGFSHAVYFFTFFHGAATAFCGINQLIGQAQIHGFFATLAGCIAHPAHCQGQTAGRTNLNRNLVVSTTNTAAFHFHDGFGIVDGFVKHFDCLFALYFLGSLLQSTIHDALVNRFFTVNHQGIHKLGQFNAAELRIRQYVALRDFSTSWHFNFL</sequence>
<protein>
    <recommendedName>
        <fullName>Hemagglutinin 2</fullName>
    </recommendedName>
</protein>